<sequence length="329" mass="37140">MAGPKRAAILMLALGEQYGGKIWSMLDDDEVRQLSLEMSTLGTVEVDTVEDMLLEFVSRMSASGALMGNFDATERLLQQYLPPERVNGIMDEIRGPAGRNMWEKLSNVQEEVLANYLKNEYPQTIAVVLSKLKPEHAARVLGIFPEDLALDVVNRMLKMEAVQKEVIESVEKTLRTEFMSNLSQTRRRDAHEVMAEIFNNFDRQTETRFITSLEEDNRESAERIKALMFTFDDLVKLDSGSAQTLMRNVDKDKLGVALKSANEDVRNFFFGNMSSRAAKMLQDDMAAMGPVRLRDVDEAQALLVNLAKDLAAKGEIMLTKNRADDELVY</sequence>
<organism>
    <name type="scientific">Bradyrhizobium diazoefficiens (strain JCM 10833 / BCRC 13528 / IAM 13628 / NBRC 14792 / USDA 110)</name>
    <dbReference type="NCBI Taxonomy" id="224911"/>
    <lineage>
        <taxon>Bacteria</taxon>
        <taxon>Pseudomonadati</taxon>
        <taxon>Pseudomonadota</taxon>
        <taxon>Alphaproteobacteria</taxon>
        <taxon>Hyphomicrobiales</taxon>
        <taxon>Nitrobacteraceae</taxon>
        <taxon>Bradyrhizobium</taxon>
    </lineage>
</organism>
<reference key="1">
    <citation type="journal article" date="2002" name="DNA Res.">
        <title>Complete genomic sequence of nitrogen-fixing symbiotic bacterium Bradyrhizobium japonicum USDA110.</title>
        <authorList>
            <person name="Kaneko T."/>
            <person name="Nakamura Y."/>
            <person name="Sato S."/>
            <person name="Minamisawa K."/>
            <person name="Uchiumi T."/>
            <person name="Sasamoto S."/>
            <person name="Watanabe A."/>
            <person name="Idesawa K."/>
            <person name="Iriguchi M."/>
            <person name="Kawashima K."/>
            <person name="Kohara M."/>
            <person name="Matsumoto M."/>
            <person name="Shimpo S."/>
            <person name="Tsuruoka H."/>
            <person name="Wada T."/>
            <person name="Yamada M."/>
            <person name="Tabata S."/>
        </authorList>
    </citation>
    <scope>NUCLEOTIDE SEQUENCE [LARGE SCALE GENOMIC DNA]</scope>
    <source>
        <strain>JCM 10833 / BCRC 13528 / IAM 13628 / NBRC 14792 / USDA 110</strain>
    </source>
</reference>
<proteinExistence type="inferred from homology"/>
<comment type="function">
    <text evidence="1">FliG is one of three proteins (FliG, FliN, FliM) that forms the rotor-mounted switch complex (C ring), located at the base of the basal body. This complex interacts with the CheY and CheZ chemotaxis proteins, in addition to contacting components of the motor that determine the direction of flagellar rotation (By similarity).</text>
</comment>
<comment type="subcellular location">
    <subcellularLocation>
        <location evidence="1">Cell inner membrane</location>
        <topology evidence="1">Peripheral membrane protein</topology>
        <orientation evidence="1">Cytoplasmic side</orientation>
    </subcellularLocation>
    <subcellularLocation>
        <location evidence="1">Bacterial flagellum basal body</location>
    </subcellularLocation>
</comment>
<comment type="similarity">
    <text evidence="2">Belongs to the FliG family.</text>
</comment>
<comment type="sequence caution" evidence="2">
    <conflict type="erroneous initiation">
        <sequence resource="EMBL-CDS" id="BAC52265"/>
    </conflict>
    <text>Extended N-terminus.</text>
</comment>
<evidence type="ECO:0000250" key="1"/>
<evidence type="ECO:0000305" key="2"/>
<keyword id="KW-0975">Bacterial flagellum</keyword>
<keyword id="KW-0997">Cell inner membrane</keyword>
<keyword id="KW-1003">Cell membrane</keyword>
<keyword id="KW-0145">Chemotaxis</keyword>
<keyword id="KW-0283">Flagellar rotation</keyword>
<keyword id="KW-0472">Membrane</keyword>
<keyword id="KW-1185">Reference proteome</keyword>
<accession>Q89ES2</accession>
<feature type="chain" id="PRO_0000184083" description="Flagellar motor switch protein FliG">
    <location>
        <begin position="1"/>
        <end position="329"/>
    </location>
</feature>
<gene>
    <name type="primary">fliG</name>
    <name type="ordered locus">blr7000</name>
</gene>
<name>FLIG_BRADU</name>
<dbReference type="EMBL" id="BA000040">
    <property type="protein sequence ID" value="BAC52265.1"/>
    <property type="status" value="ALT_INIT"/>
    <property type="molecule type" value="Genomic_DNA"/>
</dbReference>
<dbReference type="RefSeq" id="NP_773640.1">
    <property type="nucleotide sequence ID" value="NC_004463.1"/>
</dbReference>
<dbReference type="RefSeq" id="WP_011089737.1">
    <property type="nucleotide sequence ID" value="NZ_CP011360.1"/>
</dbReference>
<dbReference type="SMR" id="Q89ES2"/>
<dbReference type="FunCoup" id="Q89ES2">
    <property type="interactions" value="97"/>
</dbReference>
<dbReference type="STRING" id="224911.AAV28_32605"/>
<dbReference type="EnsemblBacteria" id="BAC52265">
    <property type="protein sequence ID" value="BAC52265"/>
    <property type="gene ID" value="BAC52265"/>
</dbReference>
<dbReference type="GeneID" id="46493964"/>
<dbReference type="KEGG" id="bja:blr7000"/>
<dbReference type="PATRIC" id="fig|224911.5.peg.7169"/>
<dbReference type="eggNOG" id="COG1536">
    <property type="taxonomic scope" value="Bacteria"/>
</dbReference>
<dbReference type="HOGENOM" id="CLU_047835_0_0_5"/>
<dbReference type="InParanoid" id="Q89ES2"/>
<dbReference type="OrthoDB" id="9780302at2"/>
<dbReference type="Proteomes" id="UP000002526">
    <property type="component" value="Chromosome"/>
</dbReference>
<dbReference type="GO" id="GO:0009425">
    <property type="term" value="C:bacterial-type flagellum basal body"/>
    <property type="evidence" value="ECO:0007669"/>
    <property type="project" value="UniProtKB-SubCell"/>
</dbReference>
<dbReference type="GO" id="GO:0005886">
    <property type="term" value="C:plasma membrane"/>
    <property type="evidence" value="ECO:0007669"/>
    <property type="project" value="UniProtKB-SubCell"/>
</dbReference>
<dbReference type="GO" id="GO:0003774">
    <property type="term" value="F:cytoskeletal motor activity"/>
    <property type="evidence" value="ECO:0007669"/>
    <property type="project" value="InterPro"/>
</dbReference>
<dbReference type="GO" id="GO:0071973">
    <property type="term" value="P:bacterial-type flagellum-dependent cell motility"/>
    <property type="evidence" value="ECO:0000318"/>
    <property type="project" value="GO_Central"/>
</dbReference>
<dbReference type="GO" id="GO:0006935">
    <property type="term" value="P:chemotaxis"/>
    <property type="evidence" value="ECO:0007669"/>
    <property type="project" value="UniProtKB-KW"/>
</dbReference>
<dbReference type="FunFam" id="1.10.220.30:FF:000001">
    <property type="entry name" value="Flagellar motor switch protein FliG"/>
    <property type="match status" value="1"/>
</dbReference>
<dbReference type="FunFam" id="1.10.220.30:FF:000034">
    <property type="entry name" value="Flagellar motor switch protein FliG"/>
    <property type="match status" value="1"/>
</dbReference>
<dbReference type="Gene3D" id="1.10.220.30">
    <property type="match status" value="3"/>
</dbReference>
<dbReference type="InterPro" id="IPR000090">
    <property type="entry name" value="Flg_Motor_Flig"/>
</dbReference>
<dbReference type="InterPro" id="IPR023087">
    <property type="entry name" value="Flg_Motor_Flig_C"/>
</dbReference>
<dbReference type="InterPro" id="IPR011002">
    <property type="entry name" value="FliG_a-hlx"/>
</dbReference>
<dbReference type="InterPro" id="IPR032779">
    <property type="entry name" value="FliG_M"/>
</dbReference>
<dbReference type="InterPro" id="IPR028263">
    <property type="entry name" value="FliG_N"/>
</dbReference>
<dbReference type="NCBIfam" id="TIGR00207">
    <property type="entry name" value="fliG"/>
    <property type="match status" value="1"/>
</dbReference>
<dbReference type="PANTHER" id="PTHR30534">
    <property type="entry name" value="FLAGELLAR MOTOR SWITCH PROTEIN FLIG"/>
    <property type="match status" value="1"/>
</dbReference>
<dbReference type="PANTHER" id="PTHR30534:SF0">
    <property type="entry name" value="FLAGELLAR MOTOR SWITCH PROTEIN FLIG"/>
    <property type="match status" value="1"/>
</dbReference>
<dbReference type="Pfam" id="PF01706">
    <property type="entry name" value="FliG_C"/>
    <property type="match status" value="1"/>
</dbReference>
<dbReference type="Pfam" id="PF14841">
    <property type="entry name" value="FliG_M"/>
    <property type="match status" value="1"/>
</dbReference>
<dbReference type="Pfam" id="PF14842">
    <property type="entry name" value="FliG_N"/>
    <property type="match status" value="1"/>
</dbReference>
<dbReference type="PIRSF" id="PIRSF003161">
    <property type="entry name" value="FliG"/>
    <property type="match status" value="1"/>
</dbReference>
<dbReference type="PRINTS" id="PR00954">
    <property type="entry name" value="FLGMOTORFLIG"/>
</dbReference>
<dbReference type="SUPFAM" id="SSF48029">
    <property type="entry name" value="FliG"/>
    <property type="match status" value="2"/>
</dbReference>
<protein>
    <recommendedName>
        <fullName>Flagellar motor switch protein FliG</fullName>
    </recommendedName>
</protein>